<comment type="catalytic activity">
    <reaction>
        <text>L-seryl-[protein] + ATP = O-phospho-L-seryl-[protein] + ADP + H(+)</text>
        <dbReference type="Rhea" id="RHEA:17989"/>
        <dbReference type="Rhea" id="RHEA-COMP:9863"/>
        <dbReference type="Rhea" id="RHEA-COMP:11604"/>
        <dbReference type="ChEBI" id="CHEBI:15378"/>
        <dbReference type="ChEBI" id="CHEBI:29999"/>
        <dbReference type="ChEBI" id="CHEBI:30616"/>
        <dbReference type="ChEBI" id="CHEBI:83421"/>
        <dbReference type="ChEBI" id="CHEBI:456216"/>
        <dbReference type="EC" id="2.7.11.1"/>
    </reaction>
</comment>
<comment type="catalytic activity">
    <reaction>
        <text>L-threonyl-[protein] + ATP = O-phospho-L-threonyl-[protein] + ADP + H(+)</text>
        <dbReference type="Rhea" id="RHEA:46608"/>
        <dbReference type="Rhea" id="RHEA-COMP:11060"/>
        <dbReference type="Rhea" id="RHEA-COMP:11605"/>
        <dbReference type="ChEBI" id="CHEBI:15378"/>
        <dbReference type="ChEBI" id="CHEBI:30013"/>
        <dbReference type="ChEBI" id="CHEBI:30616"/>
        <dbReference type="ChEBI" id="CHEBI:61977"/>
        <dbReference type="ChEBI" id="CHEBI:456216"/>
        <dbReference type="EC" id="2.7.11.1"/>
    </reaction>
</comment>
<comment type="similarity">
    <text evidence="1">Belongs to the protein kinase superfamily. Ser/Thr protein kinase family.</text>
</comment>
<dbReference type="EC" id="2.7.11.1"/>
<dbReference type="EMBL" id="BA000035">
    <property type="protein sequence ID" value="BAC16844.1"/>
    <property type="molecule type" value="Genomic_DNA"/>
</dbReference>
<dbReference type="RefSeq" id="WP_011074779.1">
    <property type="nucleotide sequence ID" value="NC_004369.1"/>
</dbReference>
<dbReference type="SMR" id="Q8FUI4"/>
<dbReference type="STRING" id="196164.gene:10740423"/>
<dbReference type="KEGG" id="cef:CE0034"/>
<dbReference type="eggNOG" id="COG0515">
    <property type="taxonomic scope" value="Bacteria"/>
</dbReference>
<dbReference type="HOGENOM" id="CLU_000288_63_44_11"/>
<dbReference type="Proteomes" id="UP000001409">
    <property type="component" value="Chromosome"/>
</dbReference>
<dbReference type="GO" id="GO:0005524">
    <property type="term" value="F:ATP binding"/>
    <property type="evidence" value="ECO:0007669"/>
    <property type="project" value="UniProtKB-KW"/>
</dbReference>
<dbReference type="GO" id="GO:0106310">
    <property type="term" value="F:protein serine kinase activity"/>
    <property type="evidence" value="ECO:0007669"/>
    <property type="project" value="RHEA"/>
</dbReference>
<dbReference type="GO" id="GO:0004674">
    <property type="term" value="F:protein serine/threonine kinase activity"/>
    <property type="evidence" value="ECO:0007669"/>
    <property type="project" value="UniProtKB-KW"/>
</dbReference>
<dbReference type="CDD" id="cd14014">
    <property type="entry name" value="STKc_PknB_like"/>
    <property type="match status" value="1"/>
</dbReference>
<dbReference type="FunFam" id="1.10.510.10:FF:000021">
    <property type="entry name" value="Serine/threonine protein kinase"/>
    <property type="match status" value="1"/>
</dbReference>
<dbReference type="Gene3D" id="3.30.200.20">
    <property type="entry name" value="Phosphorylase Kinase, domain 1"/>
    <property type="match status" value="1"/>
</dbReference>
<dbReference type="Gene3D" id="1.10.510.10">
    <property type="entry name" value="Transferase(Phosphotransferase) domain 1"/>
    <property type="match status" value="1"/>
</dbReference>
<dbReference type="InterPro" id="IPR011009">
    <property type="entry name" value="Kinase-like_dom_sf"/>
</dbReference>
<dbReference type="InterPro" id="IPR000719">
    <property type="entry name" value="Prot_kinase_dom"/>
</dbReference>
<dbReference type="InterPro" id="IPR017441">
    <property type="entry name" value="Protein_kinase_ATP_BS"/>
</dbReference>
<dbReference type="InterPro" id="IPR008271">
    <property type="entry name" value="Ser/Thr_kinase_AS"/>
</dbReference>
<dbReference type="PANTHER" id="PTHR43289">
    <property type="entry name" value="MITOGEN-ACTIVATED PROTEIN KINASE KINASE KINASE 20-RELATED"/>
    <property type="match status" value="1"/>
</dbReference>
<dbReference type="PANTHER" id="PTHR43289:SF6">
    <property type="entry name" value="SERINE_THREONINE-PROTEIN KINASE NEKL-3"/>
    <property type="match status" value="1"/>
</dbReference>
<dbReference type="Pfam" id="PF00069">
    <property type="entry name" value="Pkinase"/>
    <property type="match status" value="1"/>
</dbReference>
<dbReference type="SMART" id="SM00220">
    <property type="entry name" value="S_TKc"/>
    <property type="match status" value="1"/>
</dbReference>
<dbReference type="SUPFAM" id="SSF56112">
    <property type="entry name" value="Protein kinase-like (PK-like)"/>
    <property type="match status" value="1"/>
</dbReference>
<dbReference type="PROSITE" id="PS00107">
    <property type="entry name" value="PROTEIN_KINASE_ATP"/>
    <property type="match status" value="1"/>
</dbReference>
<dbReference type="PROSITE" id="PS50011">
    <property type="entry name" value="PROTEIN_KINASE_DOM"/>
    <property type="match status" value="1"/>
</dbReference>
<dbReference type="PROSITE" id="PS00108">
    <property type="entry name" value="PROTEIN_KINASE_ST"/>
    <property type="match status" value="1"/>
</dbReference>
<protein>
    <recommendedName>
        <fullName>Serine/threonine-protein kinases drp72</fullName>
        <ecNumber>2.7.11.1</ecNumber>
    </recommendedName>
</protein>
<organism>
    <name type="scientific">Corynebacterium efficiens (strain DSM 44549 / YS-314 / AJ 12310 / JCM 11189 / NBRC 100395)</name>
    <dbReference type="NCBI Taxonomy" id="196164"/>
    <lineage>
        <taxon>Bacteria</taxon>
        <taxon>Bacillati</taxon>
        <taxon>Actinomycetota</taxon>
        <taxon>Actinomycetes</taxon>
        <taxon>Mycobacteriales</taxon>
        <taxon>Corynebacteriaceae</taxon>
        <taxon>Corynebacterium</taxon>
    </lineage>
</organism>
<feature type="chain" id="PRO_0000171198" description="Serine/threonine-protein kinases drp72">
    <location>
        <begin position="1"/>
        <end position="520"/>
    </location>
</feature>
<feature type="domain" description="Protein kinase" evidence="1">
    <location>
        <begin position="20"/>
        <end position="281"/>
    </location>
</feature>
<feature type="region of interest" description="Disordered" evidence="3">
    <location>
        <begin position="315"/>
        <end position="334"/>
    </location>
</feature>
<feature type="region of interest" description="Disordered" evidence="3">
    <location>
        <begin position="366"/>
        <end position="504"/>
    </location>
</feature>
<feature type="compositionally biased region" description="Low complexity" evidence="3">
    <location>
        <begin position="374"/>
        <end position="394"/>
    </location>
</feature>
<feature type="compositionally biased region" description="Pro residues" evidence="3">
    <location>
        <begin position="395"/>
        <end position="411"/>
    </location>
</feature>
<feature type="compositionally biased region" description="Polar residues" evidence="3">
    <location>
        <begin position="416"/>
        <end position="429"/>
    </location>
</feature>
<feature type="compositionally biased region" description="Low complexity" evidence="3">
    <location>
        <begin position="440"/>
        <end position="449"/>
    </location>
</feature>
<feature type="compositionally biased region" description="Polar residues" evidence="3">
    <location>
        <begin position="450"/>
        <end position="460"/>
    </location>
</feature>
<feature type="compositionally biased region" description="Low complexity" evidence="3">
    <location>
        <begin position="469"/>
        <end position="484"/>
    </location>
</feature>
<feature type="compositionally biased region" description="Gly residues" evidence="3">
    <location>
        <begin position="485"/>
        <end position="496"/>
    </location>
</feature>
<feature type="active site" description="Proton acceptor" evidence="1 2">
    <location>
        <position position="148"/>
    </location>
</feature>
<feature type="binding site" evidence="1">
    <location>
        <begin position="26"/>
        <end position="34"/>
    </location>
    <ligand>
        <name>ATP</name>
        <dbReference type="ChEBI" id="CHEBI:30616"/>
    </ligand>
</feature>
<feature type="binding site" evidence="1">
    <location>
        <position position="49"/>
    </location>
    <ligand>
        <name>ATP</name>
        <dbReference type="ChEBI" id="CHEBI:30616"/>
    </ligand>
</feature>
<accession>Q8FUI4</accession>
<sequence length="520" mass="54631">MNTADDNAKQRLQELIGPDYTLQWIVGHGGMSTVWLADDNVNDREVAVKVLRPEFSDNTEFLSRFRNEARAAENIHSEHVVTTYDYREVADPAGHTFCFIVLEYIRGESLADMLEREGALPEELALDVMEQAAHGLSVIHRMGLVHRDIKPGNMLITANGILKITDFGIAKAAASVPLTRTGMVVGTAQYVSPEQAQGHQVTPASDVYSLGVVGYEMLSGRRPFTGDSSVSVAIAHINEAPPQMPTSVSAQARELIGIALRKDPARRFADGNELARAVSAVRLGNRPPQPHSPAVQATAVAPSPSASTAMLGQVARPTTSVPASPTVLPERQEKRGSGVGLGLLIAAVIAAVIGGIIWAGATGVFSGDSEETTTPETITQTVTPTETTTSEEPTLAPPPVQPTRQPVPTPDETPTRLPTTTQESPTRVSPTPEETDEPGEQTTPGGQPPLSTLPTSLGWQNNQGGTGNQGNPNTTGNPANPGTPGTTGGNGTGNAGGNSPDAADELLMSLDELMNVGGNQ</sequence>
<evidence type="ECO:0000255" key="1">
    <source>
        <dbReference type="PROSITE-ProRule" id="PRU00159"/>
    </source>
</evidence>
<evidence type="ECO:0000255" key="2">
    <source>
        <dbReference type="PROSITE-ProRule" id="PRU10027"/>
    </source>
</evidence>
<evidence type="ECO:0000256" key="3">
    <source>
        <dbReference type="SAM" id="MobiDB-lite"/>
    </source>
</evidence>
<reference key="1">
    <citation type="journal article" date="2003" name="Genome Res.">
        <title>Comparative complete genome sequence analysis of the amino acid replacements responsible for the thermostability of Corynebacterium efficiens.</title>
        <authorList>
            <person name="Nishio Y."/>
            <person name="Nakamura Y."/>
            <person name="Kawarabayasi Y."/>
            <person name="Usuda Y."/>
            <person name="Kimura E."/>
            <person name="Sugimoto S."/>
            <person name="Matsui K."/>
            <person name="Yamagishi A."/>
            <person name="Kikuchi H."/>
            <person name="Ikeo K."/>
            <person name="Gojobori T."/>
        </authorList>
    </citation>
    <scope>NUCLEOTIDE SEQUENCE [LARGE SCALE GENOMIC DNA]</scope>
    <source>
        <strain>DSM 44549 / YS-314 / AJ 12310 / JCM 11189 / NBRC 100395</strain>
    </source>
</reference>
<proteinExistence type="inferred from homology"/>
<gene>
    <name type="ordered locus">CE0034</name>
</gene>
<keyword id="KW-0067">ATP-binding</keyword>
<keyword id="KW-0418">Kinase</keyword>
<keyword id="KW-0547">Nucleotide-binding</keyword>
<keyword id="KW-1185">Reference proteome</keyword>
<keyword id="KW-0723">Serine/threonine-protein kinase</keyword>
<keyword id="KW-0808">Transferase</keyword>
<name>PKN2_COREF</name>